<proteinExistence type="evidence at protein level"/>
<organism>
    <name type="scientific">Zhangixalus schlegelii</name>
    <name type="common">Japanese gliding frog</name>
    <name type="synonym">Rhacophorus schlegelii</name>
    <dbReference type="NCBI Taxonomy" id="210202"/>
    <lineage>
        <taxon>Eukaryota</taxon>
        <taxon>Metazoa</taxon>
        <taxon>Chordata</taxon>
        <taxon>Craniata</taxon>
        <taxon>Vertebrata</taxon>
        <taxon>Euteleostomi</taxon>
        <taxon>Amphibia</taxon>
        <taxon>Batrachia</taxon>
        <taxon>Anura</taxon>
        <taxon>Neobatrachia</taxon>
        <taxon>Ranoidea</taxon>
        <taxon>Rhacophoridae</taxon>
        <taxon>Rhacophorinae</taxon>
        <taxon>Zhangixalus</taxon>
    </lineage>
</organism>
<name>H2B_ZHASC</name>
<keyword id="KW-0007">Acetylation</keyword>
<keyword id="KW-0878">Amphibian defense peptide</keyword>
<keyword id="KW-0044">Antibiotic</keyword>
<keyword id="KW-0929">Antimicrobial</keyword>
<keyword id="KW-0158">Chromosome</keyword>
<keyword id="KW-0903">Direct protein sequencing</keyword>
<keyword id="KW-0238">DNA-binding</keyword>
<keyword id="KW-0325">Glycoprotein</keyword>
<keyword id="KW-1017">Isopeptide bond</keyword>
<keyword id="KW-0544">Nucleosome core</keyword>
<keyword id="KW-0539">Nucleus</keyword>
<keyword id="KW-0597">Phosphoprotein</keyword>
<keyword id="KW-0964">Secreted</keyword>
<keyword id="KW-0832">Ubl conjugation</keyword>
<comment type="function">
    <text evidence="7">Core component of nucleosome. Nucleosomes wrap and compact DNA into chromatin, limiting DNA accessibility to the cellular machineries which require DNA as a template. Histones thereby play a central role in transcription regulation, DNA repair, DNA replication and chromosomal stability. DNA accessibility is regulated via a complex set of post-translational modifications of histones, also called histone code, and nucleosome remodeling.</text>
</comment>
<comment type="function">
    <text evidence="7">Has antibacterial activity against the Gram-negative bacteria E.coli and the Gram-positive bacteria S.aureus.</text>
</comment>
<comment type="subunit">
    <text>The nucleosome is a histone octamer containing two molecules each of H2A, H2B, H3 and H4 assembled in one H3-H4 heterotetramer and two H2A-H2B heterodimers. The octamer wraps approximately 147 bp of DNA.</text>
</comment>
<comment type="subcellular location">
    <subcellularLocation>
        <location evidence="7">Nucleus</location>
    </subcellularLocation>
    <subcellularLocation>
        <location evidence="7">Secreted</location>
    </subcellularLocation>
    <subcellularLocation>
        <location evidence="7">Chromosome</location>
    </subcellularLocation>
</comment>
<comment type="tissue specificity">
    <text evidence="8">Expressed by the skin granular glands.</text>
</comment>
<comment type="PTM">
    <text evidence="3">Monoubiquitination of Lys-121 by BRE1 gives a specific tag for epigenetic transcriptional activation and is also prerequisite for histone H3 'Lys-4' and 'Lys-79' methylation.</text>
</comment>
<comment type="PTM">
    <text evidence="1">Phosphorylated on Ser-15 during apoptosis; which facilitates apoptotic chromatin condensation.</text>
</comment>
<comment type="PTM">
    <text evidence="4">GlcNAcylation at Ser-113 promotes monoubiquitination of Lys-121. It fluctuates in response to extracellular glucose, and associates with transcribed genes (By similarity).</text>
</comment>
<comment type="similarity">
    <text evidence="5">Belongs to the histone H2B family.</text>
</comment>
<feature type="initiator methionine" description="Removed" evidence="7">
    <location>
        <position position="1"/>
    </location>
</feature>
<feature type="chain" id="PRO_0000071853" description="Histone H2B">
    <location>
        <begin position="2"/>
        <end position="126"/>
    </location>
</feature>
<feature type="region of interest" description="Disordered" evidence="6">
    <location>
        <begin position="1"/>
        <end position="35"/>
    </location>
</feature>
<feature type="compositionally biased region" description="Low complexity" evidence="6">
    <location>
        <begin position="1"/>
        <end position="12"/>
    </location>
</feature>
<feature type="modified residue" description="N6-acetyllysine" evidence="2">
    <location>
        <position position="6"/>
    </location>
</feature>
<feature type="modified residue" description="N6-acetyllysine" evidence="2">
    <location>
        <position position="13"/>
    </location>
</feature>
<feature type="modified residue" description="Phosphoserine" evidence="1">
    <location>
        <position position="15"/>
    </location>
</feature>
<feature type="modified residue" description="N6-acetyllysine" evidence="2">
    <location>
        <position position="16"/>
    </location>
</feature>
<feature type="modified residue" description="N6-acetyllysine" evidence="2">
    <location>
        <position position="21"/>
    </location>
</feature>
<feature type="glycosylation site" description="O-linked (GlcNAc) serine" evidence="4">
    <location>
        <position position="113"/>
    </location>
</feature>
<feature type="cross-link" description="Glycyl lysine isopeptide (Lys-Gly) (interchain with G-Cter in ubiquitin)" evidence="2">
    <location>
        <position position="121"/>
    </location>
</feature>
<accession>Q75VN4</accession>
<reference evidence="8 9" key="1">
    <citation type="journal article" date="2003" name="Biochem. Biophys. Res. Commun.">
        <title>A protein with antimicrobial activity in the skin of Schlegel's green tree frog Rhacophorus schlegelii (Rhacophoridae) identified as histone H2B.</title>
        <authorList>
            <person name="Kawasaki H."/>
            <person name="Isaacson T."/>
            <person name="Iwamuro S."/>
            <person name="Conlon J.M."/>
        </authorList>
    </citation>
    <scope>NUCLEOTIDE SEQUENCE [MRNA]</scope>
    <scope>PROTEIN SEQUENCE OF 2-94 AND 107-126</scope>
    <scope>SUBCELLULAR LOCATION</scope>
    <scope>FUNCTION</scope>
    <source>
        <tissue evidence="7">Skin</tissue>
    </source>
</reference>
<evidence type="ECO:0000250" key="1">
    <source>
        <dbReference type="UniProtKB" id="P06900"/>
    </source>
</evidence>
<evidence type="ECO:0000250" key="2">
    <source>
        <dbReference type="UniProtKB" id="P0C1H4"/>
    </source>
</evidence>
<evidence type="ECO:0000250" key="3">
    <source>
        <dbReference type="UniProtKB" id="P33778"/>
    </source>
</evidence>
<evidence type="ECO:0000250" key="4">
    <source>
        <dbReference type="UniProtKB" id="P62807"/>
    </source>
</evidence>
<evidence type="ECO:0000255" key="5"/>
<evidence type="ECO:0000256" key="6">
    <source>
        <dbReference type="SAM" id="MobiDB-lite"/>
    </source>
</evidence>
<evidence type="ECO:0000269" key="7">
    <source>
    </source>
</evidence>
<evidence type="ECO:0000305" key="8"/>
<evidence type="ECO:0000312" key="9">
    <source>
        <dbReference type="EMBL" id="BAC99977.1"/>
    </source>
</evidence>
<protein>
    <recommendedName>
        <fullName>Histone H2B</fullName>
    </recommendedName>
</protein>
<gene>
    <name evidence="9" type="primary">histh2b</name>
</gene>
<dbReference type="EMBL" id="AB124798">
    <property type="protein sequence ID" value="BAC99977.1"/>
    <property type="molecule type" value="mRNA"/>
</dbReference>
<dbReference type="SMR" id="Q75VN4"/>
<dbReference type="GlyCosmos" id="Q75VN4">
    <property type="glycosylation" value="1 site, No reported glycans"/>
</dbReference>
<dbReference type="GO" id="GO:0005576">
    <property type="term" value="C:extracellular region"/>
    <property type="evidence" value="ECO:0000314"/>
    <property type="project" value="UniProtKB"/>
</dbReference>
<dbReference type="GO" id="GO:0000786">
    <property type="term" value="C:nucleosome"/>
    <property type="evidence" value="ECO:0000303"/>
    <property type="project" value="UniProtKB"/>
</dbReference>
<dbReference type="GO" id="GO:0005634">
    <property type="term" value="C:nucleus"/>
    <property type="evidence" value="ECO:0007669"/>
    <property type="project" value="UniProtKB-SubCell"/>
</dbReference>
<dbReference type="GO" id="GO:0003677">
    <property type="term" value="F:DNA binding"/>
    <property type="evidence" value="ECO:0007669"/>
    <property type="project" value="UniProtKB-KW"/>
</dbReference>
<dbReference type="GO" id="GO:0046982">
    <property type="term" value="F:protein heterodimerization activity"/>
    <property type="evidence" value="ECO:0007669"/>
    <property type="project" value="InterPro"/>
</dbReference>
<dbReference type="GO" id="GO:0044877">
    <property type="term" value="F:protein-containing complex binding"/>
    <property type="evidence" value="ECO:0000250"/>
    <property type="project" value="UniProtKB"/>
</dbReference>
<dbReference type="GO" id="GO:0030527">
    <property type="term" value="F:structural constituent of chromatin"/>
    <property type="evidence" value="ECO:0007669"/>
    <property type="project" value="InterPro"/>
</dbReference>
<dbReference type="GO" id="GO:0050829">
    <property type="term" value="P:defense response to Gram-negative bacterium"/>
    <property type="evidence" value="ECO:0000314"/>
    <property type="project" value="UniProtKB"/>
</dbReference>
<dbReference type="GO" id="GO:0050830">
    <property type="term" value="P:defense response to Gram-positive bacterium"/>
    <property type="evidence" value="ECO:0000314"/>
    <property type="project" value="UniProtKB"/>
</dbReference>
<dbReference type="CDD" id="cd22910">
    <property type="entry name" value="HFD_H2B"/>
    <property type="match status" value="1"/>
</dbReference>
<dbReference type="FunFam" id="1.10.20.10:FF:000003">
    <property type="entry name" value="Histone H2B"/>
    <property type="match status" value="1"/>
</dbReference>
<dbReference type="Gene3D" id="1.10.20.10">
    <property type="entry name" value="Histone, subunit A"/>
    <property type="match status" value="1"/>
</dbReference>
<dbReference type="InterPro" id="IPR009072">
    <property type="entry name" value="Histone-fold"/>
</dbReference>
<dbReference type="InterPro" id="IPR007125">
    <property type="entry name" value="Histone_H2A/H2B/H3"/>
</dbReference>
<dbReference type="InterPro" id="IPR000558">
    <property type="entry name" value="Histone_H2B"/>
</dbReference>
<dbReference type="InterPro" id="IPR055333">
    <property type="entry name" value="HISTONE_H2B_site"/>
</dbReference>
<dbReference type="PANTHER" id="PTHR23428">
    <property type="entry name" value="HISTONE H2B"/>
    <property type="match status" value="1"/>
</dbReference>
<dbReference type="Pfam" id="PF00125">
    <property type="entry name" value="Histone"/>
    <property type="match status" value="1"/>
</dbReference>
<dbReference type="PRINTS" id="PR00621">
    <property type="entry name" value="HISTONEH2B"/>
</dbReference>
<dbReference type="SMART" id="SM00427">
    <property type="entry name" value="H2B"/>
    <property type="match status" value="1"/>
</dbReference>
<dbReference type="SUPFAM" id="SSF47113">
    <property type="entry name" value="Histone-fold"/>
    <property type="match status" value="1"/>
</dbReference>
<dbReference type="PROSITE" id="PS00357">
    <property type="entry name" value="HISTONE_H2B"/>
    <property type="match status" value="1"/>
</dbReference>
<sequence>MPEPAKSAPAAKKGSKKAVSKVQKKDGKKRRKSRKESYAIYVYKVLKQVHPDTGISSKAMSIMNSFVNDIFERIAGEASRLAHYNKRSTITSREIQTAVRLLLPGELAKHAVSEGTKAVTKYTSAK</sequence>